<gene>
    <name type="primary">cueR</name>
    <name type="ordered locus">Z0636</name>
    <name type="ordered locus">ECs0545</name>
</gene>
<proteinExistence type="inferred from homology"/>
<feature type="chain" id="PRO_0000098113" description="HTH-type transcriptional regulator CueR">
    <location>
        <begin position="1"/>
        <end position="135"/>
    </location>
</feature>
<feature type="domain" description="HTH merR-type" evidence="2">
    <location>
        <begin position="1"/>
        <end position="69"/>
    </location>
</feature>
<feature type="DNA-binding region" description="H-T-H motif" evidence="2">
    <location>
        <begin position="4"/>
        <end position="23"/>
    </location>
</feature>
<feature type="binding site" evidence="1">
    <location>
        <position position="112"/>
    </location>
    <ligand>
        <name>Cu(+)</name>
        <dbReference type="ChEBI" id="CHEBI:49552"/>
    </ligand>
</feature>
<feature type="binding site" evidence="1">
    <location>
        <position position="120"/>
    </location>
    <ligand>
        <name>Cu(+)</name>
        <dbReference type="ChEBI" id="CHEBI:49552"/>
    </ligand>
</feature>
<dbReference type="EMBL" id="AE005174">
    <property type="protein sequence ID" value="AAG54841.1"/>
    <property type="status" value="ALT_INIT"/>
    <property type="molecule type" value="Genomic_DNA"/>
</dbReference>
<dbReference type="EMBL" id="BA000007">
    <property type="protein sequence ID" value="BAB33968.1"/>
    <property type="molecule type" value="Genomic_DNA"/>
</dbReference>
<dbReference type="EMBL" id="AF288452">
    <property type="protein sequence ID" value="AAN02438.1"/>
    <property type="molecule type" value="Genomic_DNA"/>
</dbReference>
<dbReference type="PIR" id="A90697">
    <property type="entry name" value="A90697"/>
</dbReference>
<dbReference type="PIR" id="E85547">
    <property type="entry name" value="E85547"/>
</dbReference>
<dbReference type="RefSeq" id="NP_308572.1">
    <property type="nucleotide sequence ID" value="NC_002695.1"/>
</dbReference>
<dbReference type="RefSeq" id="WP_001026752.1">
    <property type="nucleotide sequence ID" value="NZ_VOAI01000005.1"/>
</dbReference>
<dbReference type="SMR" id="Q8XD09"/>
<dbReference type="STRING" id="155864.Z0636"/>
<dbReference type="GeneID" id="915192"/>
<dbReference type="KEGG" id="ece:Z0636"/>
<dbReference type="KEGG" id="ecs:ECs_0545"/>
<dbReference type="PATRIC" id="fig|386585.9.peg.652"/>
<dbReference type="eggNOG" id="COG0789">
    <property type="taxonomic scope" value="Bacteria"/>
</dbReference>
<dbReference type="HOGENOM" id="CLU_060077_2_0_6"/>
<dbReference type="OMA" id="DAGSECC"/>
<dbReference type="Proteomes" id="UP000000558">
    <property type="component" value="Chromosome"/>
</dbReference>
<dbReference type="Proteomes" id="UP000002519">
    <property type="component" value="Chromosome"/>
</dbReference>
<dbReference type="GO" id="GO:0005737">
    <property type="term" value="C:cytoplasm"/>
    <property type="evidence" value="ECO:0007669"/>
    <property type="project" value="UniProtKB-SubCell"/>
</dbReference>
<dbReference type="GO" id="GO:0005507">
    <property type="term" value="F:copper ion binding"/>
    <property type="evidence" value="ECO:0007669"/>
    <property type="project" value="InterPro"/>
</dbReference>
<dbReference type="GO" id="GO:0003677">
    <property type="term" value="F:DNA binding"/>
    <property type="evidence" value="ECO:0007669"/>
    <property type="project" value="UniProtKB-KW"/>
</dbReference>
<dbReference type="GO" id="GO:0003700">
    <property type="term" value="F:DNA-binding transcription factor activity"/>
    <property type="evidence" value="ECO:0007669"/>
    <property type="project" value="InterPro"/>
</dbReference>
<dbReference type="GO" id="GO:0045893">
    <property type="term" value="P:positive regulation of DNA-templated transcription"/>
    <property type="evidence" value="ECO:0007669"/>
    <property type="project" value="InterPro"/>
</dbReference>
<dbReference type="CDD" id="cd01108">
    <property type="entry name" value="HTH_CueR"/>
    <property type="match status" value="1"/>
</dbReference>
<dbReference type="FunFam" id="1.10.1660.10:FF:000001">
    <property type="entry name" value="Cu(I)-responsive transcriptional regulator"/>
    <property type="match status" value="1"/>
</dbReference>
<dbReference type="Gene3D" id="1.10.1660.10">
    <property type="match status" value="1"/>
</dbReference>
<dbReference type="InterPro" id="IPR011789">
    <property type="entry name" value="CueR"/>
</dbReference>
<dbReference type="InterPro" id="IPR009061">
    <property type="entry name" value="DNA-bd_dom_put_sf"/>
</dbReference>
<dbReference type="InterPro" id="IPR000551">
    <property type="entry name" value="MerR-type_HTH_dom"/>
</dbReference>
<dbReference type="InterPro" id="IPR047057">
    <property type="entry name" value="MerR_fam"/>
</dbReference>
<dbReference type="NCBIfam" id="TIGR02044">
    <property type="entry name" value="CueR"/>
    <property type="match status" value="1"/>
</dbReference>
<dbReference type="NCBIfam" id="NF007590">
    <property type="entry name" value="PRK10227.1"/>
    <property type="match status" value="1"/>
</dbReference>
<dbReference type="PANTHER" id="PTHR30204:SF16">
    <property type="entry name" value="HTH-TYPE TRANSCRIPTIONAL REGULATOR CUER"/>
    <property type="match status" value="1"/>
</dbReference>
<dbReference type="PANTHER" id="PTHR30204">
    <property type="entry name" value="REDOX-CYCLING DRUG-SENSING TRANSCRIPTIONAL ACTIVATOR SOXR"/>
    <property type="match status" value="1"/>
</dbReference>
<dbReference type="Pfam" id="PF13411">
    <property type="entry name" value="MerR_1"/>
    <property type="match status" value="1"/>
</dbReference>
<dbReference type="PRINTS" id="PR00040">
    <property type="entry name" value="HTHMERR"/>
</dbReference>
<dbReference type="SMART" id="SM00422">
    <property type="entry name" value="HTH_MERR"/>
    <property type="match status" value="1"/>
</dbReference>
<dbReference type="SUPFAM" id="SSF46955">
    <property type="entry name" value="Putative DNA-binding domain"/>
    <property type="match status" value="1"/>
</dbReference>
<dbReference type="PROSITE" id="PS00552">
    <property type="entry name" value="HTH_MERR_1"/>
    <property type="match status" value="1"/>
</dbReference>
<dbReference type="PROSITE" id="PS50937">
    <property type="entry name" value="HTH_MERR_2"/>
    <property type="match status" value="1"/>
</dbReference>
<organism>
    <name type="scientific">Escherichia coli O157:H7</name>
    <dbReference type="NCBI Taxonomy" id="83334"/>
    <lineage>
        <taxon>Bacteria</taxon>
        <taxon>Pseudomonadati</taxon>
        <taxon>Pseudomonadota</taxon>
        <taxon>Gammaproteobacteria</taxon>
        <taxon>Enterobacterales</taxon>
        <taxon>Enterobacteriaceae</taxon>
        <taxon>Escherichia</taxon>
    </lineage>
</organism>
<reference key="1">
    <citation type="journal article" date="2001" name="Nature">
        <title>Genome sequence of enterohaemorrhagic Escherichia coli O157:H7.</title>
        <authorList>
            <person name="Perna N.T."/>
            <person name="Plunkett G. III"/>
            <person name="Burland V."/>
            <person name="Mau B."/>
            <person name="Glasner J.D."/>
            <person name="Rose D.J."/>
            <person name="Mayhew G.F."/>
            <person name="Evans P.S."/>
            <person name="Gregor J."/>
            <person name="Kirkpatrick H.A."/>
            <person name="Posfai G."/>
            <person name="Hackett J."/>
            <person name="Klink S."/>
            <person name="Boutin A."/>
            <person name="Shao Y."/>
            <person name="Miller L."/>
            <person name="Grotbeck E.J."/>
            <person name="Davis N.W."/>
            <person name="Lim A."/>
            <person name="Dimalanta E.T."/>
            <person name="Potamousis K."/>
            <person name="Apodaca J."/>
            <person name="Anantharaman T.S."/>
            <person name="Lin J."/>
            <person name="Yen G."/>
            <person name="Schwartz D.C."/>
            <person name="Welch R.A."/>
            <person name="Blattner F.R."/>
        </authorList>
    </citation>
    <scope>NUCLEOTIDE SEQUENCE [LARGE SCALE GENOMIC DNA]</scope>
    <source>
        <strain>O157:H7 / EDL933 / ATCC 700927 / EHEC</strain>
    </source>
</reference>
<reference key="2">
    <citation type="journal article" date="2001" name="DNA Res.">
        <title>Complete genome sequence of enterohemorrhagic Escherichia coli O157:H7 and genomic comparison with a laboratory strain K-12.</title>
        <authorList>
            <person name="Hayashi T."/>
            <person name="Makino K."/>
            <person name="Ohnishi M."/>
            <person name="Kurokawa K."/>
            <person name="Ishii K."/>
            <person name="Yokoyama K."/>
            <person name="Han C.-G."/>
            <person name="Ohtsubo E."/>
            <person name="Nakayama K."/>
            <person name="Murata T."/>
            <person name="Tanaka M."/>
            <person name="Tobe T."/>
            <person name="Iida T."/>
            <person name="Takami H."/>
            <person name="Honda T."/>
            <person name="Sasakawa C."/>
            <person name="Ogasawara N."/>
            <person name="Yasunaga T."/>
            <person name="Kuhara S."/>
            <person name="Shiba T."/>
            <person name="Hattori M."/>
            <person name="Shinagawa H."/>
        </authorList>
    </citation>
    <scope>NUCLEOTIDE SEQUENCE [LARGE SCALE GENOMIC DNA]</scope>
    <source>
        <strain>O157:H7 / Sakai / RIMD 0509952 / EHEC</strain>
    </source>
</reference>
<reference key="3">
    <citation type="journal article" date="2002" name="J. Appl. Microbiol.">
        <title>A PCR test for detecting Escherichia coli O157:H7 based on the identification of the small inserted locus (SILO157).</title>
        <authorList>
            <person name="Perelle S."/>
            <person name="Fach P."/>
            <person name="Dilasser F."/>
            <person name="Grout J."/>
        </authorList>
    </citation>
    <scope>NUCLEOTIDE SEQUENCE [GENOMIC DNA] OF 8-135</scope>
    <source>
        <strain>O157:H7 / EDL933 / ATCC 700927 / EHEC</strain>
    </source>
</reference>
<name>CUER_ECO57</name>
<comment type="function">
    <text evidence="1">Regulates the transcription of the copA and cueO genes. It detects cytoplasmic copper stress and activates transcription in response to increasing copper concentrations (By similarity).</text>
</comment>
<comment type="subunit">
    <text evidence="1">Homodimer.</text>
</comment>
<comment type="subcellular location">
    <subcellularLocation>
        <location evidence="3">Cytoplasm</location>
    </subcellularLocation>
</comment>
<comment type="domain">
    <text evidence="1">It contains a N-terminal DNA binding region and a C-terminal metal binding region.</text>
</comment>
<comment type="sequence caution" evidence="3">
    <conflict type="erroneous initiation">
        <sequence resource="EMBL-CDS" id="AAG54841"/>
    </conflict>
</comment>
<sequence>MNISDVAKITGLTSKAIRFYEEKGLVTPPMRSENGYRTYTQQHLNELTLLRQARQVGFNLEESGELVNLFNDPQRHSADVKRRTLEKVAEIERHIEELQSMRNQLLALANACPGDDSADCPIIENLSGCCHHRAG</sequence>
<evidence type="ECO:0000250" key="1"/>
<evidence type="ECO:0000255" key="2">
    <source>
        <dbReference type="PROSITE-ProRule" id="PRU00254"/>
    </source>
</evidence>
<evidence type="ECO:0000305" key="3"/>
<keyword id="KW-0010">Activator</keyword>
<keyword id="KW-0186">Copper</keyword>
<keyword id="KW-0963">Cytoplasm</keyword>
<keyword id="KW-0238">DNA-binding</keyword>
<keyword id="KW-0479">Metal-binding</keyword>
<keyword id="KW-1185">Reference proteome</keyword>
<keyword id="KW-0804">Transcription</keyword>
<keyword id="KW-0805">Transcription regulation</keyword>
<protein>
    <recommendedName>
        <fullName>HTH-type transcriptional regulator CueR</fullName>
    </recommendedName>
    <alternativeName>
        <fullName>Copper efflux regulator</fullName>
    </alternativeName>
    <alternativeName>
        <fullName>Copper export regulator</fullName>
    </alternativeName>
</protein>
<accession>Q8XD09</accession>
<accession>Q8KY47</accession>